<dbReference type="EC" id="3.2.1.8" evidence="3"/>
<dbReference type="EMBL" id="DS572703">
    <property type="protein sequence ID" value="EGY23604.1"/>
    <property type="molecule type" value="Genomic_DNA"/>
</dbReference>
<dbReference type="RefSeq" id="XP_009653073.1">
    <property type="nucleotide sequence ID" value="XM_009654778.1"/>
</dbReference>
<dbReference type="SMR" id="G2X4G0"/>
<dbReference type="EnsemblFungi" id="EGY23604">
    <property type="protein sequence ID" value="EGY23604"/>
    <property type="gene ID" value="VDAG_05042"/>
</dbReference>
<dbReference type="GeneID" id="20706505"/>
<dbReference type="KEGG" id="vda:VDAG_05042"/>
<dbReference type="eggNOG" id="ENOG502RXA7">
    <property type="taxonomic scope" value="Eukaryota"/>
</dbReference>
<dbReference type="HOGENOM" id="CLU_052631_0_0_1"/>
<dbReference type="InParanoid" id="G2X4G0"/>
<dbReference type="OMA" id="DYWQNWT"/>
<dbReference type="OrthoDB" id="36858at1028384"/>
<dbReference type="UniPathway" id="UPA00114"/>
<dbReference type="PHI-base" id="PHI:11606"/>
<dbReference type="Proteomes" id="UP000001611">
    <property type="component" value="Chromosome 4"/>
</dbReference>
<dbReference type="GO" id="GO:0005576">
    <property type="term" value="C:extracellular region"/>
    <property type="evidence" value="ECO:0000314"/>
    <property type="project" value="UniProtKB"/>
</dbReference>
<dbReference type="GO" id="GO:0042025">
    <property type="term" value="C:host cell nucleus"/>
    <property type="evidence" value="ECO:0000314"/>
    <property type="project" value="UniProtKB"/>
</dbReference>
<dbReference type="GO" id="GO:0031176">
    <property type="term" value="F:endo-1,4-beta-xylanase activity"/>
    <property type="evidence" value="ECO:0007669"/>
    <property type="project" value="UniProtKB-EC"/>
</dbReference>
<dbReference type="GO" id="GO:0140404">
    <property type="term" value="P:effector-mediated perturbation of host innate immune response by symbiont"/>
    <property type="evidence" value="ECO:0000315"/>
    <property type="project" value="UniProtKB"/>
</dbReference>
<dbReference type="GO" id="GO:0045493">
    <property type="term" value="P:xylan catabolic process"/>
    <property type="evidence" value="ECO:0007669"/>
    <property type="project" value="UniProtKB-UniPathway"/>
</dbReference>
<dbReference type="FunFam" id="2.60.120.180:FF:000001">
    <property type="entry name" value="Endo-1,4-beta-xylanase"/>
    <property type="match status" value="1"/>
</dbReference>
<dbReference type="Gene3D" id="2.60.120.180">
    <property type="match status" value="1"/>
</dbReference>
<dbReference type="InterPro" id="IPR013320">
    <property type="entry name" value="ConA-like_dom_sf"/>
</dbReference>
<dbReference type="InterPro" id="IPR013319">
    <property type="entry name" value="GH11/12"/>
</dbReference>
<dbReference type="InterPro" id="IPR018208">
    <property type="entry name" value="GH11_AS_1"/>
</dbReference>
<dbReference type="InterPro" id="IPR033123">
    <property type="entry name" value="GH11_dom"/>
</dbReference>
<dbReference type="InterPro" id="IPR001137">
    <property type="entry name" value="Glyco_hydro_11"/>
</dbReference>
<dbReference type="PANTHER" id="PTHR46828">
    <property type="entry name" value="ENDO-1,4-BETA-XYLANASE A-RELATED"/>
    <property type="match status" value="1"/>
</dbReference>
<dbReference type="PANTHER" id="PTHR46828:SF2">
    <property type="entry name" value="ENDO-1,4-BETA-XYLANASE A-RELATED"/>
    <property type="match status" value="1"/>
</dbReference>
<dbReference type="Pfam" id="PF00457">
    <property type="entry name" value="Glyco_hydro_11"/>
    <property type="match status" value="1"/>
</dbReference>
<dbReference type="PRINTS" id="PR00911">
    <property type="entry name" value="GLHYDRLASE11"/>
</dbReference>
<dbReference type="SUPFAM" id="SSF49899">
    <property type="entry name" value="Concanavalin A-like lectins/glucanases"/>
    <property type="match status" value="1"/>
</dbReference>
<dbReference type="PROSITE" id="PS00776">
    <property type="entry name" value="GH11_1"/>
    <property type="match status" value="1"/>
</dbReference>
<dbReference type="PROSITE" id="PS51761">
    <property type="entry name" value="GH11_3"/>
    <property type="match status" value="1"/>
</dbReference>
<feature type="signal peptide" evidence="2">
    <location>
        <begin position="1"/>
        <end position="19"/>
    </location>
</feature>
<feature type="chain" id="PRO_5003439435" description="Ethylene-inducing xylanase 1">
    <location>
        <begin position="20"/>
        <end position="223"/>
    </location>
</feature>
<feature type="domain" description="GH11" evidence="3">
    <location>
        <begin position="34"/>
        <end position="223"/>
    </location>
</feature>
<feature type="region of interest" description="Nuclear localization signal" evidence="5">
    <location>
        <begin position="174"/>
        <end position="184"/>
    </location>
</feature>
<feature type="active site" description="Nucleophile" evidence="3">
    <location>
        <position position="119"/>
    </location>
</feature>
<feature type="active site" description="Proton donor" evidence="3">
    <location>
        <position position="210"/>
    </location>
</feature>
<feature type="mutagenesis site" description="Abolishes secretion. Impairs activation of host N.benthamiana immune response." evidence="5">
    <location>
        <begin position="1"/>
        <end position="20"/>
    </location>
</feature>
<feature type="mutagenesis site" description="Abolishes localization to host nucleus. Impairs activation of host N.benthamiana immune response." evidence="5">
    <original>RRTKRTSGSVN</original>
    <variation>AAAAAAAAAAA</variation>
    <location>
        <begin position="174"/>
        <end position="184"/>
    </location>
</feature>
<evidence type="ECO:0000250" key="1">
    <source>
        <dbReference type="UniProtKB" id="B3VSG7"/>
    </source>
</evidence>
<evidence type="ECO:0000255" key="2"/>
<evidence type="ECO:0000255" key="3">
    <source>
        <dbReference type="PROSITE-ProRule" id="PRU01097"/>
    </source>
</evidence>
<evidence type="ECO:0000269" key="4">
    <source>
    </source>
</evidence>
<evidence type="ECO:0000269" key="5">
    <source>
    </source>
</evidence>
<evidence type="ECO:0000303" key="6">
    <source>
    </source>
</evidence>
<evidence type="ECO:0000303" key="7">
    <source>
    </source>
</evidence>
<evidence type="ECO:0000305" key="8"/>
<organism>
    <name type="scientific">Verticillium dahliae (strain VdLs.17 / ATCC MYA-4575 / FGSC 10137)</name>
    <name type="common">Verticillium wilt</name>
    <dbReference type="NCBI Taxonomy" id="498257"/>
    <lineage>
        <taxon>Eukaryota</taxon>
        <taxon>Fungi</taxon>
        <taxon>Dikarya</taxon>
        <taxon>Ascomycota</taxon>
        <taxon>Pezizomycotina</taxon>
        <taxon>Sordariomycetes</taxon>
        <taxon>Hypocreomycetidae</taxon>
        <taxon>Glomerellales</taxon>
        <taxon>Plectosphaerellaceae</taxon>
        <taxon>Verticillium</taxon>
    </lineage>
</organism>
<keyword id="KW-0119">Carbohydrate metabolism</keyword>
<keyword id="KW-0326">Glycosidase</keyword>
<keyword id="KW-1048">Host nucleus</keyword>
<keyword id="KW-0378">Hydrolase</keyword>
<keyword id="KW-0624">Polysaccharide degradation</keyword>
<keyword id="KW-1185">Reference proteome</keyword>
<keyword id="KW-0964">Secreted</keyword>
<keyword id="KW-0732">Signal</keyword>
<keyword id="KW-0843">Virulence</keyword>
<keyword id="KW-0858">Xylan degradation</keyword>
<accession>G2X4G0</accession>
<proteinExistence type="evidence at protein level"/>
<name>EIX1_VERDV</name>
<gene>
    <name evidence="6" type="primary">EIX1</name>
    <name evidence="7" type="synonym">Vd424Y</name>
    <name type="ORF">VDAG_05042</name>
</gene>
<protein>
    <recommendedName>
        <fullName evidence="6">Ethylene-inducing xylanase 1</fullName>
        <shortName evidence="6">EIX1</shortName>
        <ecNumber evidence="3">3.2.1.8</ecNumber>
    </recommendedName>
    <alternativeName>
        <fullName evidence="7">Effector Vd424Y</fullName>
    </alternativeName>
    <alternativeName>
        <fullName evidence="6">Endo-1,4-beta-xylanase EIX1</fullName>
    </alternativeName>
</protein>
<comment type="function">
    <text evidence="1 4 5">Endo-1,4-beta-xylanase involved in the hydrolysis of xylan, a major structural heterogeneous polysaccharide found in plant biomass representing the second most abundant polysaccharide in the biosphere, after cellulose (By similarity). Acts as an effector that localizes to the host nucleus to contribute to the virulence process (PubMed:34233072). Induces host innate immunity responses; triggers BAK1-and SOBIR1-dependent cell death, salicylic acid signaling and jasmonic acid signaling (PubMed:34233072). Does not exhibit any cell death when transiently expressed in N.benthamiana (PubMed:33205907).</text>
</comment>
<comment type="catalytic activity">
    <reaction evidence="3">
        <text>Endohydrolysis of (1-&gt;4)-beta-D-xylosidic linkages in xylans.</text>
        <dbReference type="EC" id="3.2.1.8"/>
    </reaction>
</comment>
<comment type="pathway">
    <text evidence="3">Glycan degradation; xylan degradation.</text>
</comment>
<comment type="subcellular location">
    <subcellularLocation>
        <location evidence="5">Secreted</location>
    </subcellularLocation>
    <subcellularLocation>
        <location evidence="5">Host nucleus</location>
    </subcellularLocation>
</comment>
<comment type="developmental stage">
    <text evidence="5">Induced in the early stages of infection of cotton plant.</text>
</comment>
<comment type="disruption phenotype">
    <text evidence="5">Decreases virulence during cotton plant infection.</text>
</comment>
<comment type="similarity">
    <text evidence="8">Belongs to the glycosyl hydrolase 11 (cellulase G) family.</text>
</comment>
<reference key="1">
    <citation type="journal article" date="2011" name="PLoS Pathog.">
        <title>Comparative genomics yields insights into niche adaptation of plant vascular wilt pathogens.</title>
        <authorList>
            <person name="Klosterman S.J."/>
            <person name="Subbarao K.V."/>
            <person name="Kang S."/>
            <person name="Veronese P."/>
            <person name="Gold S.E."/>
            <person name="Thomma B.P.H.J."/>
            <person name="Chen Z."/>
            <person name="Henrissat B."/>
            <person name="Lee Y.-H."/>
            <person name="Park J."/>
            <person name="Garcia-Pedrajas M.D."/>
            <person name="Barbara D.J."/>
            <person name="Anchieta A."/>
            <person name="de Jonge R."/>
            <person name="Santhanam P."/>
            <person name="Maruthachalam K."/>
            <person name="Atallah Z."/>
            <person name="Amyotte S.G."/>
            <person name="Paz Z."/>
            <person name="Inderbitzin P."/>
            <person name="Hayes R.J."/>
            <person name="Heiman D.I."/>
            <person name="Young S."/>
            <person name="Zeng Q."/>
            <person name="Engels R."/>
            <person name="Galagan J."/>
            <person name="Cuomo C.A."/>
            <person name="Dobinson K.F."/>
            <person name="Ma L.-J."/>
        </authorList>
    </citation>
    <scope>NUCLEOTIDE SEQUENCE [LARGE SCALE GENOMIC DNA]</scope>
    <source>
        <strain>VdLs.17 / ATCC MYA-4575 / FGSC 10137</strain>
    </source>
</reference>
<reference key="2">
    <citation type="journal article" date="2021" name="J. Integr. Plant Biol.">
        <title>Nicotiana benthamiana LRR-RLP NbEIX2 mediates the perception of an EIX-like protein from Verticillium dahliae.</title>
        <authorList>
            <person name="Yin Z."/>
            <person name="Wang N."/>
            <person name="Pi L."/>
            <person name="Li L."/>
            <person name="Duan W."/>
            <person name="Wang X."/>
            <person name="Dou D."/>
        </authorList>
    </citation>
    <scope>FUNCTION</scope>
</reference>
<reference key="3">
    <citation type="journal article" date="2021" name="Mol. Plant Pathol.">
        <title>Verticillium dahliae secreted protein Vd424Y is required for full virulence, targets the nucleus of plant cells, and induces cell death.</title>
        <authorList>
            <person name="Liu L."/>
            <person name="Wang Z."/>
            <person name="Li J."/>
            <person name="Wang Y."/>
            <person name="Yuan J."/>
            <person name="Zhan J."/>
            <person name="Wang P."/>
            <person name="Lin Y."/>
            <person name="Li F."/>
            <person name="Ge X."/>
        </authorList>
    </citation>
    <scope>FUNCTION</scope>
    <scope>SUBCELLULAR LOCATION</scope>
    <scope>DEVELOPMENTAL STAGE</scope>
    <scope>DISRUPTION PHENOTYPE</scope>
    <scope>MUTAGENESIS OF 1-MET--SER-20 AND 174-ARG--ASN-184</scope>
    <source>
        <strain evidence="7">Vd991</strain>
    </source>
</reference>
<sequence>MVSFTSLLAAFSVVSGVLTSPIAVVPEVNTALAKRTPSSTGTSGGFYYSFWTDTPNSVTYTNGDAGKFSVSWKNNNGNHVGGKGWRTGSARTIKYSGSYKPNGNSYLAIYGWTRSPLIEYYIVESFGTYNPSTGATSKGQFTVDGSVYDLYTSTRTNAPSIEGTRTFTQFWSVRRTKRTSGSVNTGAHFAAWKKAGMNLGSHDYQILAVEGYKSSGSATMTVS</sequence>